<dbReference type="EC" id="4.3.3.6" evidence="1"/>
<dbReference type="EC" id="3.5.1.2" evidence="1"/>
<dbReference type="EMBL" id="CP000903">
    <property type="protein sequence ID" value="ABY41280.1"/>
    <property type="molecule type" value="Genomic_DNA"/>
</dbReference>
<dbReference type="RefSeq" id="WP_002009616.1">
    <property type="nucleotide sequence ID" value="NC_010184.1"/>
</dbReference>
<dbReference type="SMR" id="A9VMA0"/>
<dbReference type="KEGG" id="bwe:BcerKBAB4_0011"/>
<dbReference type="eggNOG" id="COG0311">
    <property type="taxonomic scope" value="Bacteria"/>
</dbReference>
<dbReference type="HOGENOM" id="CLU_069674_2_0_9"/>
<dbReference type="UniPathway" id="UPA00245"/>
<dbReference type="Proteomes" id="UP000002154">
    <property type="component" value="Chromosome"/>
</dbReference>
<dbReference type="GO" id="GO:0005829">
    <property type="term" value="C:cytosol"/>
    <property type="evidence" value="ECO:0007669"/>
    <property type="project" value="TreeGrafter"/>
</dbReference>
<dbReference type="GO" id="GO:1903600">
    <property type="term" value="C:glutaminase complex"/>
    <property type="evidence" value="ECO:0007669"/>
    <property type="project" value="TreeGrafter"/>
</dbReference>
<dbReference type="GO" id="GO:0004359">
    <property type="term" value="F:glutaminase activity"/>
    <property type="evidence" value="ECO:0007669"/>
    <property type="project" value="UniProtKB-UniRule"/>
</dbReference>
<dbReference type="GO" id="GO:0036381">
    <property type="term" value="F:pyridoxal 5'-phosphate synthase (glutamine hydrolysing) activity"/>
    <property type="evidence" value="ECO:0007669"/>
    <property type="project" value="UniProtKB-UniRule"/>
</dbReference>
<dbReference type="GO" id="GO:0006543">
    <property type="term" value="P:glutamine catabolic process"/>
    <property type="evidence" value="ECO:0007669"/>
    <property type="project" value="UniProtKB-UniRule"/>
</dbReference>
<dbReference type="GO" id="GO:0042823">
    <property type="term" value="P:pyridoxal phosphate biosynthetic process"/>
    <property type="evidence" value="ECO:0007669"/>
    <property type="project" value="UniProtKB-UniRule"/>
</dbReference>
<dbReference type="GO" id="GO:0008614">
    <property type="term" value="P:pyridoxine metabolic process"/>
    <property type="evidence" value="ECO:0007669"/>
    <property type="project" value="TreeGrafter"/>
</dbReference>
<dbReference type="CDD" id="cd01749">
    <property type="entry name" value="GATase1_PB"/>
    <property type="match status" value="1"/>
</dbReference>
<dbReference type="FunFam" id="3.40.50.880:FF:000010">
    <property type="entry name" value="uncharacterized protein LOC100176842 isoform X2"/>
    <property type="match status" value="1"/>
</dbReference>
<dbReference type="Gene3D" id="3.40.50.880">
    <property type="match status" value="1"/>
</dbReference>
<dbReference type="HAMAP" id="MF_01615">
    <property type="entry name" value="PdxT"/>
    <property type="match status" value="1"/>
</dbReference>
<dbReference type="InterPro" id="IPR029062">
    <property type="entry name" value="Class_I_gatase-like"/>
</dbReference>
<dbReference type="InterPro" id="IPR002161">
    <property type="entry name" value="PdxT/SNO"/>
</dbReference>
<dbReference type="InterPro" id="IPR021196">
    <property type="entry name" value="PdxT/SNO_CS"/>
</dbReference>
<dbReference type="NCBIfam" id="TIGR03800">
    <property type="entry name" value="PLP_synth_Pdx2"/>
    <property type="match status" value="1"/>
</dbReference>
<dbReference type="PANTHER" id="PTHR31559">
    <property type="entry name" value="PYRIDOXAL 5'-PHOSPHATE SYNTHASE SUBUNIT SNO"/>
    <property type="match status" value="1"/>
</dbReference>
<dbReference type="PANTHER" id="PTHR31559:SF0">
    <property type="entry name" value="PYRIDOXAL 5'-PHOSPHATE SYNTHASE SUBUNIT SNO1-RELATED"/>
    <property type="match status" value="1"/>
</dbReference>
<dbReference type="Pfam" id="PF01174">
    <property type="entry name" value="SNO"/>
    <property type="match status" value="1"/>
</dbReference>
<dbReference type="PIRSF" id="PIRSF005639">
    <property type="entry name" value="Glut_amidoT_SNO"/>
    <property type="match status" value="1"/>
</dbReference>
<dbReference type="SUPFAM" id="SSF52317">
    <property type="entry name" value="Class I glutamine amidotransferase-like"/>
    <property type="match status" value="1"/>
</dbReference>
<dbReference type="PROSITE" id="PS01236">
    <property type="entry name" value="PDXT_SNO_1"/>
    <property type="match status" value="1"/>
</dbReference>
<dbReference type="PROSITE" id="PS51130">
    <property type="entry name" value="PDXT_SNO_2"/>
    <property type="match status" value="1"/>
</dbReference>
<organism>
    <name type="scientific">Bacillus mycoides (strain KBAB4)</name>
    <name type="common">Bacillus weihenstephanensis</name>
    <dbReference type="NCBI Taxonomy" id="315730"/>
    <lineage>
        <taxon>Bacteria</taxon>
        <taxon>Bacillati</taxon>
        <taxon>Bacillota</taxon>
        <taxon>Bacilli</taxon>
        <taxon>Bacillales</taxon>
        <taxon>Bacillaceae</taxon>
        <taxon>Bacillus</taxon>
        <taxon>Bacillus cereus group</taxon>
    </lineage>
</organism>
<keyword id="KW-0315">Glutamine amidotransferase</keyword>
<keyword id="KW-0378">Hydrolase</keyword>
<keyword id="KW-0456">Lyase</keyword>
<keyword id="KW-0663">Pyridoxal phosphate</keyword>
<evidence type="ECO:0000255" key="1">
    <source>
        <dbReference type="HAMAP-Rule" id="MF_01615"/>
    </source>
</evidence>
<proteinExistence type="inferred from homology"/>
<accession>A9VMA0</accession>
<gene>
    <name evidence="1" type="primary">pdxT</name>
    <name type="ordered locus">BcerKBAB4_0011</name>
</gene>
<comment type="function">
    <text evidence="1">Catalyzes the hydrolysis of glutamine to glutamate and ammonia as part of the biosynthesis of pyridoxal 5'-phosphate. The resulting ammonia molecule is channeled to the active site of PdxS.</text>
</comment>
<comment type="catalytic activity">
    <reaction evidence="1">
        <text>aldehydo-D-ribose 5-phosphate + D-glyceraldehyde 3-phosphate + L-glutamine = pyridoxal 5'-phosphate + L-glutamate + phosphate + 3 H2O + H(+)</text>
        <dbReference type="Rhea" id="RHEA:31507"/>
        <dbReference type="ChEBI" id="CHEBI:15377"/>
        <dbReference type="ChEBI" id="CHEBI:15378"/>
        <dbReference type="ChEBI" id="CHEBI:29985"/>
        <dbReference type="ChEBI" id="CHEBI:43474"/>
        <dbReference type="ChEBI" id="CHEBI:58273"/>
        <dbReference type="ChEBI" id="CHEBI:58359"/>
        <dbReference type="ChEBI" id="CHEBI:59776"/>
        <dbReference type="ChEBI" id="CHEBI:597326"/>
        <dbReference type="EC" id="4.3.3.6"/>
    </reaction>
</comment>
<comment type="catalytic activity">
    <reaction evidence="1">
        <text>L-glutamine + H2O = L-glutamate + NH4(+)</text>
        <dbReference type="Rhea" id="RHEA:15889"/>
        <dbReference type="ChEBI" id="CHEBI:15377"/>
        <dbReference type="ChEBI" id="CHEBI:28938"/>
        <dbReference type="ChEBI" id="CHEBI:29985"/>
        <dbReference type="ChEBI" id="CHEBI:58359"/>
        <dbReference type="EC" id="3.5.1.2"/>
    </reaction>
</comment>
<comment type="pathway">
    <text evidence="1">Cofactor biosynthesis; pyridoxal 5'-phosphate biosynthesis.</text>
</comment>
<comment type="subunit">
    <text evidence="1">In the presence of PdxS, forms a dodecamer of heterodimers. Only shows activity in the heterodimer.</text>
</comment>
<comment type="similarity">
    <text evidence="1">Belongs to the glutaminase PdxT/SNO family.</text>
</comment>
<sequence>MVKIGVLGLQGAVREHVKSVEASGAEAVVVKRIEQLEEIDGLILPGGESTTMRRLIDKYAFMEPLRTFAKSGKPMFGTCAGMILLAKTLIGYEEAHIGAMDITVERNAFGRQKDSFEAALSIKGVGEDFVGVFIRAPYVVNVADDVEVLSMHGERMVAVRQGPFLAASFHPELTDDHRVTAYFVEMVKEAKMKKVV</sequence>
<feature type="chain" id="PRO_1000185878" description="Pyridoxal 5'-phosphate synthase subunit PdxT">
    <location>
        <begin position="1"/>
        <end position="196"/>
    </location>
</feature>
<feature type="active site" description="Nucleophile" evidence="1">
    <location>
        <position position="79"/>
    </location>
</feature>
<feature type="active site" description="Charge relay system" evidence="1">
    <location>
        <position position="170"/>
    </location>
</feature>
<feature type="active site" description="Charge relay system" evidence="1">
    <location>
        <position position="172"/>
    </location>
</feature>
<feature type="binding site" evidence="1">
    <location>
        <begin position="47"/>
        <end position="49"/>
    </location>
    <ligand>
        <name>L-glutamine</name>
        <dbReference type="ChEBI" id="CHEBI:58359"/>
    </ligand>
</feature>
<feature type="binding site" evidence="1">
    <location>
        <position position="106"/>
    </location>
    <ligand>
        <name>L-glutamine</name>
        <dbReference type="ChEBI" id="CHEBI:58359"/>
    </ligand>
</feature>
<feature type="binding site" evidence="1">
    <location>
        <begin position="134"/>
        <end position="135"/>
    </location>
    <ligand>
        <name>L-glutamine</name>
        <dbReference type="ChEBI" id="CHEBI:58359"/>
    </ligand>
</feature>
<name>PDXT_BACMK</name>
<reference key="1">
    <citation type="journal article" date="2008" name="Chem. Biol. Interact.">
        <title>Extending the Bacillus cereus group genomics to putative food-borne pathogens of different toxicity.</title>
        <authorList>
            <person name="Lapidus A."/>
            <person name="Goltsman E."/>
            <person name="Auger S."/>
            <person name="Galleron N."/>
            <person name="Segurens B."/>
            <person name="Dossat C."/>
            <person name="Land M.L."/>
            <person name="Broussolle V."/>
            <person name="Brillard J."/>
            <person name="Guinebretiere M.-H."/>
            <person name="Sanchis V."/>
            <person name="Nguen-the C."/>
            <person name="Lereclus D."/>
            <person name="Richardson P."/>
            <person name="Wincker P."/>
            <person name="Weissenbach J."/>
            <person name="Ehrlich S.D."/>
            <person name="Sorokin A."/>
        </authorList>
    </citation>
    <scope>NUCLEOTIDE SEQUENCE [LARGE SCALE GENOMIC DNA]</scope>
    <source>
        <strain>KBAB4</strain>
    </source>
</reference>
<protein>
    <recommendedName>
        <fullName evidence="1">Pyridoxal 5'-phosphate synthase subunit PdxT</fullName>
        <ecNumber evidence="1">4.3.3.6</ecNumber>
    </recommendedName>
    <alternativeName>
        <fullName evidence="1">Pdx2</fullName>
    </alternativeName>
    <alternativeName>
        <fullName evidence="1">Pyridoxal 5'-phosphate synthase glutaminase subunit</fullName>
        <ecNumber evidence="1">3.5.1.2</ecNumber>
    </alternativeName>
</protein>